<organism>
    <name type="scientific">Pseudochaenichthys georgianus</name>
    <name type="common">South Georgia icefish</name>
    <dbReference type="NCBI Taxonomy" id="52239"/>
    <lineage>
        <taxon>Eukaryota</taxon>
        <taxon>Metazoa</taxon>
        <taxon>Chordata</taxon>
        <taxon>Craniata</taxon>
        <taxon>Vertebrata</taxon>
        <taxon>Euteleostomi</taxon>
        <taxon>Actinopterygii</taxon>
        <taxon>Neopterygii</taxon>
        <taxon>Teleostei</taxon>
        <taxon>Neoteleostei</taxon>
        <taxon>Acanthomorphata</taxon>
        <taxon>Eupercaria</taxon>
        <taxon>Perciformes</taxon>
        <taxon>Notothenioidei</taxon>
        <taxon>Channichthyidae</taxon>
        <taxon>Pseudochaenichthys</taxon>
    </lineage>
</organism>
<keyword id="KW-0963">Cytoplasm</keyword>
<keyword id="KW-0349">Heme</keyword>
<keyword id="KW-0408">Iron</keyword>
<keyword id="KW-0479">Metal-binding</keyword>
<keyword id="KW-0514">Muscle protein</keyword>
<keyword id="KW-0560">Oxidoreductase</keyword>
<keyword id="KW-0561">Oxygen transport</keyword>
<keyword id="KW-0813">Transport</keyword>
<dbReference type="EC" id="1.7.-.-" evidence="2"/>
<dbReference type="EC" id="1.11.1.-" evidence="2"/>
<dbReference type="EMBL" id="U71055">
    <property type="protein sequence ID" value="AAG16643.1"/>
    <property type="molecule type" value="mRNA"/>
</dbReference>
<dbReference type="RefSeq" id="XP_033937963.1">
    <property type="nucleotide sequence ID" value="XM_034082072.2"/>
</dbReference>
<dbReference type="SMR" id="Q9DEP1"/>
<dbReference type="GeneID" id="117446069"/>
<dbReference type="OrthoDB" id="6344802at2759"/>
<dbReference type="GO" id="GO:0070062">
    <property type="term" value="C:extracellular exosome"/>
    <property type="evidence" value="ECO:0007669"/>
    <property type="project" value="TreeGrafter"/>
</dbReference>
<dbReference type="GO" id="GO:0016528">
    <property type="term" value="C:sarcoplasm"/>
    <property type="evidence" value="ECO:0000250"/>
    <property type="project" value="UniProtKB"/>
</dbReference>
<dbReference type="GO" id="GO:0020037">
    <property type="term" value="F:heme binding"/>
    <property type="evidence" value="ECO:0007669"/>
    <property type="project" value="InterPro"/>
</dbReference>
<dbReference type="GO" id="GO:0046872">
    <property type="term" value="F:metal ion binding"/>
    <property type="evidence" value="ECO:0007669"/>
    <property type="project" value="UniProtKB-KW"/>
</dbReference>
<dbReference type="GO" id="GO:0098809">
    <property type="term" value="F:nitrite reductase activity"/>
    <property type="evidence" value="ECO:0000250"/>
    <property type="project" value="UniProtKB"/>
</dbReference>
<dbReference type="GO" id="GO:0019825">
    <property type="term" value="F:oxygen binding"/>
    <property type="evidence" value="ECO:0007669"/>
    <property type="project" value="InterPro"/>
</dbReference>
<dbReference type="GO" id="GO:0005344">
    <property type="term" value="F:oxygen carrier activity"/>
    <property type="evidence" value="ECO:0000250"/>
    <property type="project" value="UniProtKB"/>
</dbReference>
<dbReference type="GO" id="GO:0004601">
    <property type="term" value="F:peroxidase activity"/>
    <property type="evidence" value="ECO:0000250"/>
    <property type="project" value="UniProtKB"/>
</dbReference>
<dbReference type="GO" id="GO:0019430">
    <property type="term" value="P:removal of superoxide radicals"/>
    <property type="evidence" value="ECO:0000250"/>
    <property type="project" value="UniProtKB"/>
</dbReference>
<dbReference type="Gene3D" id="6.10.140.2100">
    <property type="match status" value="1"/>
</dbReference>
<dbReference type="Gene3D" id="6.10.140.2110">
    <property type="match status" value="1"/>
</dbReference>
<dbReference type="InterPro" id="IPR000971">
    <property type="entry name" value="Globin"/>
</dbReference>
<dbReference type="InterPro" id="IPR009050">
    <property type="entry name" value="Globin-like_sf"/>
</dbReference>
<dbReference type="InterPro" id="IPR002335">
    <property type="entry name" value="Myoglobin"/>
</dbReference>
<dbReference type="PANTHER" id="PTHR47132">
    <property type="entry name" value="MYOGLOBIN"/>
    <property type="match status" value="1"/>
</dbReference>
<dbReference type="PANTHER" id="PTHR47132:SF1">
    <property type="entry name" value="MYOGLOBIN"/>
    <property type="match status" value="1"/>
</dbReference>
<dbReference type="Pfam" id="PF00042">
    <property type="entry name" value="Globin"/>
    <property type="match status" value="1"/>
</dbReference>
<dbReference type="PRINTS" id="PR00613">
    <property type="entry name" value="MYOGLOBIN"/>
</dbReference>
<dbReference type="SUPFAM" id="SSF46458">
    <property type="entry name" value="Globin-like"/>
    <property type="match status" value="1"/>
</dbReference>
<dbReference type="PROSITE" id="PS01033">
    <property type="entry name" value="GLOBIN"/>
    <property type="match status" value="1"/>
</dbReference>
<name>MYG_PSEGE</name>
<reference key="1">
    <citation type="journal article" date="1997" name="Mol. Mar. Biol. Biotechnol.">
        <title>Conservation of the myoglobin gene among Antarctic notothenioid fishes.</title>
        <authorList>
            <person name="Vayda M.E."/>
            <person name="Small D.J."/>
            <person name="Yuan M.-L."/>
            <person name="Costello L."/>
            <person name="Sidell B.D."/>
        </authorList>
    </citation>
    <scope>NUCLEOTIDE SEQUENCE [MRNA]</scope>
    <source>
        <tissue>Heart ventricle</tissue>
    </source>
</reference>
<sequence>MADFDMVLKCWGLVEADYATYGSLVLTRLFTEHPETLKLFPKFAGIAHGDLAGDAGVSAHGATVLNKLGDLLKARGGHAALLKPLSSSHATKHKIPIINFKLIAEVIGKVMEEKAGLDAAGQTALRNVMAVIIADMEADYKELGFTE</sequence>
<gene>
    <name type="primary">mb</name>
</gene>
<comment type="function">
    <text evidence="2">Monomeric heme protein which primary function is to store oxygen and facilitate its diffusion within muscle tissues. Reversibly binds oxygen through a pentacoordinated heme iron and enables its timely and efficient release as needed during periods of heightened demand. Depending on the oxidative conditions of tissues and cells, and in addition to its ability to bind oxygen, it also has a nitrite reductase activity whereby it regulates the production of bioactive nitric oxide. Under stress conditions, like hypoxia and anoxia, it also protects cells against reactive oxygen species thanks to its pseudoperoxidase activity.</text>
</comment>
<comment type="catalytic activity">
    <reaction evidence="2">
        <text>Fe(III)-heme b-[protein] + nitric oxide + H2O = Fe(II)-heme b-[protein] + nitrite + 2 H(+)</text>
        <dbReference type="Rhea" id="RHEA:77711"/>
        <dbReference type="Rhea" id="RHEA-COMP:18975"/>
        <dbReference type="Rhea" id="RHEA-COMP:18976"/>
        <dbReference type="ChEBI" id="CHEBI:15377"/>
        <dbReference type="ChEBI" id="CHEBI:15378"/>
        <dbReference type="ChEBI" id="CHEBI:16301"/>
        <dbReference type="ChEBI" id="CHEBI:16480"/>
        <dbReference type="ChEBI" id="CHEBI:55376"/>
        <dbReference type="ChEBI" id="CHEBI:60344"/>
    </reaction>
    <physiologicalReaction direction="right-to-left" evidence="2">
        <dbReference type="Rhea" id="RHEA:77713"/>
    </physiologicalReaction>
</comment>
<comment type="catalytic activity">
    <reaction evidence="2">
        <text>H2O2 + AH2 = A + 2 H2O</text>
        <dbReference type="Rhea" id="RHEA:30275"/>
        <dbReference type="ChEBI" id="CHEBI:13193"/>
        <dbReference type="ChEBI" id="CHEBI:15377"/>
        <dbReference type="ChEBI" id="CHEBI:16240"/>
        <dbReference type="ChEBI" id="CHEBI:17499"/>
    </reaction>
</comment>
<comment type="subunit">
    <text evidence="3">Monomeric.</text>
</comment>
<comment type="subcellular location">
    <subcellularLocation>
        <location evidence="2">Cytoplasm</location>
        <location evidence="2">Sarcoplasm</location>
    </subcellularLocation>
</comment>
<comment type="similarity">
    <text evidence="6">Belongs to the globin family.</text>
</comment>
<feature type="initiator methionine" description="Removed" evidence="1">
    <location>
        <position position="1"/>
    </location>
</feature>
<feature type="chain" id="PRO_0000053370" description="Myoglobin">
    <location>
        <begin position="2"/>
        <end position="147"/>
    </location>
</feature>
<feature type="domain" description="Globin" evidence="6">
    <location>
        <begin position="2"/>
        <end position="141"/>
    </location>
</feature>
<feature type="binding site" evidence="5">
    <location>
        <position position="60"/>
    </location>
    <ligand>
        <name>nitrite</name>
        <dbReference type="ChEBI" id="CHEBI:16301"/>
    </ligand>
</feature>
<feature type="binding site" evidence="4 6">
    <location>
        <position position="60"/>
    </location>
    <ligand>
        <name>O2</name>
        <dbReference type="ChEBI" id="CHEBI:15379"/>
    </ligand>
</feature>
<feature type="binding site" description="proximal binding residue" evidence="2">
    <location>
        <position position="89"/>
    </location>
    <ligand>
        <name>heme b</name>
        <dbReference type="ChEBI" id="CHEBI:60344"/>
    </ligand>
    <ligandPart>
        <name>Fe</name>
        <dbReference type="ChEBI" id="CHEBI:18248"/>
    </ligandPart>
</feature>
<accession>Q9DEP1</accession>
<proteinExistence type="evidence at transcript level"/>
<protein>
    <recommendedName>
        <fullName>Myoglobin</fullName>
    </recommendedName>
    <alternativeName>
        <fullName evidence="2">Nitrite reductase MB</fullName>
        <ecNumber evidence="2">1.7.-.-</ecNumber>
    </alternativeName>
    <alternativeName>
        <fullName evidence="2">Pseudoperoxidase MB</fullName>
        <ecNumber evidence="2">1.11.1.-</ecNumber>
    </alternativeName>
</protein>
<evidence type="ECO:0000250" key="1"/>
<evidence type="ECO:0000250" key="2">
    <source>
        <dbReference type="UniProtKB" id="P02144"/>
    </source>
</evidence>
<evidence type="ECO:0000250" key="3">
    <source>
        <dbReference type="UniProtKB" id="P02185"/>
    </source>
</evidence>
<evidence type="ECO:0000250" key="4">
    <source>
        <dbReference type="UniProtKB" id="P02189"/>
    </source>
</evidence>
<evidence type="ECO:0000250" key="5">
    <source>
        <dbReference type="UniProtKB" id="P68082"/>
    </source>
</evidence>
<evidence type="ECO:0000255" key="6">
    <source>
        <dbReference type="PROSITE-ProRule" id="PRU00238"/>
    </source>
</evidence>